<proteinExistence type="inferred from homology"/>
<name>FOLD_PROMM</name>
<comment type="function">
    <text evidence="1">Catalyzes the oxidation of 5,10-methylenetetrahydrofolate to 5,10-methenyltetrahydrofolate and then the hydrolysis of 5,10-methenyltetrahydrofolate to 10-formyltetrahydrofolate.</text>
</comment>
<comment type="catalytic activity">
    <reaction evidence="1">
        <text>(6R)-5,10-methylene-5,6,7,8-tetrahydrofolate + NADP(+) = (6R)-5,10-methenyltetrahydrofolate + NADPH</text>
        <dbReference type="Rhea" id="RHEA:22812"/>
        <dbReference type="ChEBI" id="CHEBI:15636"/>
        <dbReference type="ChEBI" id="CHEBI:57455"/>
        <dbReference type="ChEBI" id="CHEBI:57783"/>
        <dbReference type="ChEBI" id="CHEBI:58349"/>
        <dbReference type="EC" id="1.5.1.5"/>
    </reaction>
</comment>
<comment type="catalytic activity">
    <reaction evidence="1">
        <text>(6R)-5,10-methenyltetrahydrofolate + H2O = (6R)-10-formyltetrahydrofolate + H(+)</text>
        <dbReference type="Rhea" id="RHEA:23700"/>
        <dbReference type="ChEBI" id="CHEBI:15377"/>
        <dbReference type="ChEBI" id="CHEBI:15378"/>
        <dbReference type="ChEBI" id="CHEBI:57455"/>
        <dbReference type="ChEBI" id="CHEBI:195366"/>
        <dbReference type="EC" id="3.5.4.9"/>
    </reaction>
</comment>
<comment type="pathway">
    <text evidence="1">One-carbon metabolism; tetrahydrofolate interconversion.</text>
</comment>
<comment type="subunit">
    <text evidence="1">Homodimer.</text>
</comment>
<comment type="similarity">
    <text evidence="1">Belongs to the tetrahydrofolate dehydrogenase/cyclohydrolase family.</text>
</comment>
<dbReference type="EC" id="1.5.1.5" evidence="1"/>
<dbReference type="EC" id="3.5.4.9" evidence="1"/>
<dbReference type="EMBL" id="BX548175">
    <property type="protein sequence ID" value="CAE21285.1"/>
    <property type="molecule type" value="Genomic_DNA"/>
</dbReference>
<dbReference type="RefSeq" id="WP_011130482.1">
    <property type="nucleotide sequence ID" value="NC_005071.1"/>
</dbReference>
<dbReference type="SMR" id="Q7TUV8"/>
<dbReference type="KEGG" id="pmt:PMT_1110"/>
<dbReference type="eggNOG" id="COG0190">
    <property type="taxonomic scope" value="Bacteria"/>
</dbReference>
<dbReference type="HOGENOM" id="CLU_034045_2_1_3"/>
<dbReference type="OrthoDB" id="9803580at2"/>
<dbReference type="UniPathway" id="UPA00193"/>
<dbReference type="Proteomes" id="UP000001423">
    <property type="component" value="Chromosome"/>
</dbReference>
<dbReference type="GO" id="GO:0005829">
    <property type="term" value="C:cytosol"/>
    <property type="evidence" value="ECO:0007669"/>
    <property type="project" value="TreeGrafter"/>
</dbReference>
<dbReference type="GO" id="GO:0004477">
    <property type="term" value="F:methenyltetrahydrofolate cyclohydrolase activity"/>
    <property type="evidence" value="ECO:0007669"/>
    <property type="project" value="UniProtKB-UniRule"/>
</dbReference>
<dbReference type="GO" id="GO:0004488">
    <property type="term" value="F:methylenetetrahydrofolate dehydrogenase (NADP+) activity"/>
    <property type="evidence" value="ECO:0007669"/>
    <property type="project" value="UniProtKB-UniRule"/>
</dbReference>
<dbReference type="GO" id="GO:0000105">
    <property type="term" value="P:L-histidine biosynthetic process"/>
    <property type="evidence" value="ECO:0007669"/>
    <property type="project" value="UniProtKB-KW"/>
</dbReference>
<dbReference type="GO" id="GO:0009086">
    <property type="term" value="P:methionine biosynthetic process"/>
    <property type="evidence" value="ECO:0007669"/>
    <property type="project" value="UniProtKB-KW"/>
</dbReference>
<dbReference type="GO" id="GO:0006164">
    <property type="term" value="P:purine nucleotide biosynthetic process"/>
    <property type="evidence" value="ECO:0007669"/>
    <property type="project" value="UniProtKB-KW"/>
</dbReference>
<dbReference type="GO" id="GO:0035999">
    <property type="term" value="P:tetrahydrofolate interconversion"/>
    <property type="evidence" value="ECO:0007669"/>
    <property type="project" value="UniProtKB-UniRule"/>
</dbReference>
<dbReference type="CDD" id="cd01080">
    <property type="entry name" value="NAD_bind_m-THF_DH_Cyclohyd"/>
    <property type="match status" value="1"/>
</dbReference>
<dbReference type="FunFam" id="3.40.50.720:FF:000006">
    <property type="entry name" value="Bifunctional protein FolD"/>
    <property type="match status" value="1"/>
</dbReference>
<dbReference type="FunFam" id="3.40.50.10860:FF:000005">
    <property type="entry name" value="C-1-tetrahydrofolate synthase, cytoplasmic, putative"/>
    <property type="match status" value="1"/>
</dbReference>
<dbReference type="Gene3D" id="3.40.50.10860">
    <property type="entry name" value="Leucine Dehydrogenase, chain A, domain 1"/>
    <property type="match status" value="1"/>
</dbReference>
<dbReference type="Gene3D" id="3.40.50.720">
    <property type="entry name" value="NAD(P)-binding Rossmann-like Domain"/>
    <property type="match status" value="1"/>
</dbReference>
<dbReference type="HAMAP" id="MF_01576">
    <property type="entry name" value="THF_DHG_CYH"/>
    <property type="match status" value="1"/>
</dbReference>
<dbReference type="InterPro" id="IPR046346">
    <property type="entry name" value="Aminoacid_DH-like_N_sf"/>
</dbReference>
<dbReference type="InterPro" id="IPR036291">
    <property type="entry name" value="NAD(P)-bd_dom_sf"/>
</dbReference>
<dbReference type="InterPro" id="IPR000672">
    <property type="entry name" value="THF_DH/CycHdrlase"/>
</dbReference>
<dbReference type="InterPro" id="IPR020630">
    <property type="entry name" value="THF_DH/CycHdrlase_cat_dom"/>
</dbReference>
<dbReference type="InterPro" id="IPR020867">
    <property type="entry name" value="THF_DH/CycHdrlase_CS"/>
</dbReference>
<dbReference type="InterPro" id="IPR020631">
    <property type="entry name" value="THF_DH/CycHdrlase_NAD-bd_dom"/>
</dbReference>
<dbReference type="NCBIfam" id="NF010783">
    <property type="entry name" value="PRK14186.1"/>
    <property type="match status" value="1"/>
</dbReference>
<dbReference type="PANTHER" id="PTHR48099:SF5">
    <property type="entry name" value="C-1-TETRAHYDROFOLATE SYNTHASE, CYTOPLASMIC"/>
    <property type="match status" value="1"/>
</dbReference>
<dbReference type="PANTHER" id="PTHR48099">
    <property type="entry name" value="C-1-TETRAHYDROFOLATE SYNTHASE, CYTOPLASMIC-RELATED"/>
    <property type="match status" value="1"/>
</dbReference>
<dbReference type="Pfam" id="PF00763">
    <property type="entry name" value="THF_DHG_CYH"/>
    <property type="match status" value="1"/>
</dbReference>
<dbReference type="Pfam" id="PF02882">
    <property type="entry name" value="THF_DHG_CYH_C"/>
    <property type="match status" value="1"/>
</dbReference>
<dbReference type="PRINTS" id="PR00085">
    <property type="entry name" value="THFDHDRGNASE"/>
</dbReference>
<dbReference type="SUPFAM" id="SSF53223">
    <property type="entry name" value="Aminoacid dehydrogenase-like, N-terminal domain"/>
    <property type="match status" value="1"/>
</dbReference>
<dbReference type="SUPFAM" id="SSF51735">
    <property type="entry name" value="NAD(P)-binding Rossmann-fold domains"/>
    <property type="match status" value="1"/>
</dbReference>
<dbReference type="PROSITE" id="PS00767">
    <property type="entry name" value="THF_DHG_CYH_2"/>
    <property type="match status" value="1"/>
</dbReference>
<keyword id="KW-0028">Amino-acid biosynthesis</keyword>
<keyword id="KW-0368">Histidine biosynthesis</keyword>
<keyword id="KW-0378">Hydrolase</keyword>
<keyword id="KW-0486">Methionine biosynthesis</keyword>
<keyword id="KW-0511">Multifunctional enzyme</keyword>
<keyword id="KW-0521">NADP</keyword>
<keyword id="KW-0554">One-carbon metabolism</keyword>
<keyword id="KW-0560">Oxidoreductase</keyword>
<keyword id="KW-0658">Purine biosynthesis</keyword>
<keyword id="KW-1185">Reference proteome</keyword>
<gene>
    <name evidence="1" type="primary">folD</name>
    <name type="ordered locus">PMT_1110</name>
</gene>
<accession>Q7TUV8</accession>
<feature type="chain" id="PRO_0000268436" description="Bifunctional protein FolD">
    <location>
        <begin position="1"/>
        <end position="302"/>
    </location>
</feature>
<feature type="binding site" evidence="1">
    <location>
        <begin position="165"/>
        <end position="167"/>
    </location>
    <ligand>
        <name>NADP(+)</name>
        <dbReference type="ChEBI" id="CHEBI:58349"/>
    </ligand>
</feature>
<feature type="binding site" evidence="1">
    <location>
        <position position="190"/>
    </location>
    <ligand>
        <name>NADP(+)</name>
        <dbReference type="ChEBI" id="CHEBI:58349"/>
    </ligand>
</feature>
<feature type="binding site" evidence="1">
    <location>
        <position position="231"/>
    </location>
    <ligand>
        <name>NADP(+)</name>
        <dbReference type="ChEBI" id="CHEBI:58349"/>
    </ligand>
</feature>
<evidence type="ECO:0000255" key="1">
    <source>
        <dbReference type="HAMAP-Rule" id="MF_01576"/>
    </source>
</evidence>
<protein>
    <recommendedName>
        <fullName evidence="1">Bifunctional protein FolD</fullName>
    </recommendedName>
    <domain>
        <recommendedName>
            <fullName evidence="1">Methylenetetrahydrofolate dehydrogenase</fullName>
            <ecNumber evidence="1">1.5.1.5</ecNumber>
        </recommendedName>
    </domain>
    <domain>
        <recommendedName>
            <fullName evidence="1">Methenyltetrahydrofolate cyclohydrolase</fullName>
            <ecNumber evidence="1">3.5.4.9</ecNumber>
        </recommendedName>
    </domain>
</protein>
<organism>
    <name type="scientific">Prochlorococcus marinus (strain MIT 9313)</name>
    <dbReference type="NCBI Taxonomy" id="74547"/>
    <lineage>
        <taxon>Bacteria</taxon>
        <taxon>Bacillati</taxon>
        <taxon>Cyanobacteriota</taxon>
        <taxon>Cyanophyceae</taxon>
        <taxon>Synechococcales</taxon>
        <taxon>Prochlorococcaceae</taxon>
        <taxon>Prochlorococcus</taxon>
    </lineage>
</organism>
<reference key="1">
    <citation type="journal article" date="2003" name="Nature">
        <title>Genome divergence in two Prochlorococcus ecotypes reflects oceanic niche differentiation.</title>
        <authorList>
            <person name="Rocap G."/>
            <person name="Larimer F.W."/>
            <person name="Lamerdin J.E."/>
            <person name="Malfatti S."/>
            <person name="Chain P."/>
            <person name="Ahlgren N.A."/>
            <person name="Arellano A."/>
            <person name="Coleman M."/>
            <person name="Hauser L."/>
            <person name="Hess W.R."/>
            <person name="Johnson Z.I."/>
            <person name="Land M.L."/>
            <person name="Lindell D."/>
            <person name="Post A.F."/>
            <person name="Regala W."/>
            <person name="Shah M."/>
            <person name="Shaw S.L."/>
            <person name="Steglich C."/>
            <person name="Sullivan M.B."/>
            <person name="Ting C.S."/>
            <person name="Tolonen A."/>
            <person name="Webb E.A."/>
            <person name="Zinser E.R."/>
            <person name="Chisholm S.W."/>
        </authorList>
    </citation>
    <scope>NUCLEOTIDE SEQUENCE [LARGE SCALE GENOMIC DNA]</scope>
    <source>
        <strain>MIT 9313</strain>
    </source>
</reference>
<sequence>MALRLDGKQLAAELEQRLQAEIAAGLVQAGRPPGLAVLRIGDDPASGVYVANKQKACGRIGVASHLTHLPETVSVSKVLATIQALNIDERVDGILLQLPLPKGLDEGPLLAAIDPEKDADGLHTLNLGRLLKGEPGPRSCTPAGVMALLARHQISLERKRAVVIGRSILVGQPMALMLQAANATVSVAHSHTGDLASLTQQADVLVVAAGRARMIGAEHVKPGAVVVDVGIHRLPLDPELGTQAKARLCGDVRTQEVEPLASALTPVPGGVGPMTVTMLLVNTVARWQQHCGLPFGLRDLLV</sequence>